<proteinExistence type="evidence at transcript level"/>
<comment type="function">
    <text evidence="1">May operate as a cation/H(+) antiporter.</text>
</comment>
<comment type="subcellular location">
    <subcellularLocation>
        <location evidence="1">Membrane</location>
        <topology evidence="1">Multi-pass membrane protein</topology>
    </subcellularLocation>
</comment>
<comment type="similarity">
    <text evidence="3">Belongs to the monovalent cation:proton antiporter 2 (CPA2) transporter (TC 2.A.37) family. CHX (TC 2.A.37.4) subfamily.</text>
</comment>
<accession>Q9FFB7</accession>
<accession>Q58P70</accession>
<organism>
    <name type="scientific">Arabidopsis thaliana</name>
    <name type="common">Mouse-ear cress</name>
    <dbReference type="NCBI Taxonomy" id="3702"/>
    <lineage>
        <taxon>Eukaryota</taxon>
        <taxon>Viridiplantae</taxon>
        <taxon>Streptophyta</taxon>
        <taxon>Embryophyta</taxon>
        <taxon>Tracheophyta</taxon>
        <taxon>Spermatophyta</taxon>
        <taxon>Magnoliopsida</taxon>
        <taxon>eudicotyledons</taxon>
        <taxon>Gunneridae</taxon>
        <taxon>Pentapetalae</taxon>
        <taxon>rosids</taxon>
        <taxon>malvids</taxon>
        <taxon>Brassicales</taxon>
        <taxon>Brassicaceae</taxon>
        <taxon>Camelineae</taxon>
        <taxon>Arabidopsis</taxon>
    </lineage>
</organism>
<feature type="chain" id="PRO_0000394980" description="Cation/H(+) antiporter 9">
    <location>
        <begin position="1"/>
        <end position="800"/>
    </location>
</feature>
<feature type="transmembrane region" description="Helical" evidence="2">
    <location>
        <begin position="43"/>
        <end position="63"/>
    </location>
</feature>
<feature type="transmembrane region" description="Helical" evidence="2">
    <location>
        <begin position="73"/>
        <end position="93"/>
    </location>
</feature>
<feature type="transmembrane region" description="Helical" evidence="2">
    <location>
        <begin position="110"/>
        <end position="130"/>
    </location>
</feature>
<feature type="transmembrane region" description="Helical" evidence="2">
    <location>
        <begin position="145"/>
        <end position="165"/>
    </location>
</feature>
<feature type="transmembrane region" description="Helical" evidence="2">
    <location>
        <begin position="186"/>
        <end position="206"/>
    </location>
</feature>
<feature type="transmembrane region" description="Helical" evidence="2">
    <location>
        <begin position="216"/>
        <end position="236"/>
    </location>
</feature>
<feature type="transmembrane region" description="Helical" evidence="2">
    <location>
        <begin position="247"/>
        <end position="267"/>
    </location>
</feature>
<feature type="transmembrane region" description="Helical" evidence="2">
    <location>
        <begin position="287"/>
        <end position="306"/>
    </location>
</feature>
<feature type="transmembrane region" description="Helical" evidence="2">
    <location>
        <begin position="338"/>
        <end position="358"/>
    </location>
</feature>
<feature type="transmembrane region" description="Helical" evidence="2">
    <location>
        <begin position="371"/>
        <end position="391"/>
    </location>
</feature>
<feature type="transmembrane region" description="Helical" evidence="2">
    <location>
        <begin position="401"/>
        <end position="421"/>
    </location>
</feature>
<feature type="transmembrane region" description="Helical" evidence="2">
    <location>
        <begin position="430"/>
        <end position="450"/>
    </location>
</feature>
<reference key="1">
    <citation type="journal article" date="1997" name="DNA Res.">
        <title>Structural analysis of Arabidopsis thaliana chromosome 5. I. Sequence features of the 1.6 Mb regions covered by twenty physically assigned P1 clones.</title>
        <authorList>
            <person name="Sato S."/>
            <person name="Kotani H."/>
            <person name="Nakamura Y."/>
            <person name="Kaneko T."/>
            <person name="Asamizu E."/>
            <person name="Fukami M."/>
            <person name="Miyajima N."/>
            <person name="Tabata S."/>
        </authorList>
    </citation>
    <scope>NUCLEOTIDE SEQUENCE [LARGE SCALE GENOMIC DNA]</scope>
    <source>
        <strain>cv. Columbia</strain>
    </source>
</reference>
<reference key="2">
    <citation type="journal article" date="2017" name="Plant J.">
        <title>Araport11: a complete reannotation of the Arabidopsis thaliana reference genome.</title>
        <authorList>
            <person name="Cheng C.Y."/>
            <person name="Krishnakumar V."/>
            <person name="Chan A.P."/>
            <person name="Thibaud-Nissen F."/>
            <person name="Schobel S."/>
            <person name="Town C.D."/>
        </authorList>
    </citation>
    <scope>GENOME REANNOTATION</scope>
    <source>
        <strain>cv. Columbia</strain>
    </source>
</reference>
<reference key="3">
    <citation type="journal article" date="2004" name="Plant Physiol.">
        <title>Expression patterns of a novel AtCHX gene family highlight potential roles in osmotic adjustment and K+ homeostasis in pollen development.</title>
        <authorList>
            <person name="Sze H."/>
            <person name="Padmanaban S."/>
            <person name="Cellier F."/>
            <person name="Honys D."/>
            <person name="Cheng N.-H."/>
            <person name="Bock K.W."/>
            <person name="Conejero G."/>
            <person name="Li X."/>
            <person name="Twell D."/>
            <person name="Ward J.M."/>
            <person name="Hirschi K.D."/>
        </authorList>
    </citation>
    <scope>NUCLEOTIDE SEQUENCE [MRNA] OF 1-789</scope>
    <scope>GENE FAMILY</scope>
    <scope>NOMENCLATURE</scope>
    <source>
        <tissue>Pollen</tissue>
    </source>
</reference>
<reference key="4">
    <citation type="journal article" date="2001" name="Plant Physiol.">
        <title>Phylogenetic relationships within cation transporter families of Arabidopsis.</title>
        <authorList>
            <person name="Maeser P."/>
            <person name="Thomine S."/>
            <person name="Schroeder J.I."/>
            <person name="Ward J.M."/>
            <person name="Hirschi K."/>
            <person name="Sze H."/>
            <person name="Talke I.N."/>
            <person name="Amtmann A."/>
            <person name="Maathuis F.J.M."/>
            <person name="Sanders D."/>
            <person name="Harper J.F."/>
            <person name="Tchieu J."/>
            <person name="Gribskov M."/>
            <person name="Persans M.W."/>
            <person name="Salt D.E."/>
            <person name="Kim S.A."/>
            <person name="Guerinot M.L."/>
        </authorList>
    </citation>
    <scope>GENE FAMILY</scope>
    <scope>NOMENCLATURE</scope>
</reference>
<keyword id="KW-0050">Antiport</keyword>
<keyword id="KW-0406">Ion transport</keyword>
<keyword id="KW-0472">Membrane</keyword>
<keyword id="KW-0630">Potassium</keyword>
<keyword id="KW-0633">Potassium transport</keyword>
<keyword id="KW-1185">Reference proteome</keyword>
<keyword id="KW-0812">Transmembrane</keyword>
<keyword id="KW-1133">Transmembrane helix</keyword>
<keyword id="KW-0813">Transport</keyword>
<sequence>MTDSQALVPGPSPPHSKAEICYGATFFNISSYGIMEKYETPTVIFGYALPLLELQIILIFVCIVLSHMFLRRIGIPRFVSNILAGLILGPQLLDLLEYSSDRLSLDIPGNVALEGVARLGLVMFTFLMGVKTNKRAVYQIGKRPIVIAVSSFFVTMISGLAFRNFRLDKVDPLYMPLRLAPTERSVIVSIQAVTLLPVITHLVYELKMSNSELGRIAISTAAVSDFLGFLTLVCISYVGTYRYVSPGIANRDIVALIILVLVILFIFKPMAQRIVDMTPEGKPVPKVYLYVTILTAIAASIYLSVFNQMYILGALLVGLAIPDGPPLGSALEARFESLVTNIFFPISIAVMAMKADVVRALYSFDDISFNILLLGLTVVVKWTASFVPCLIFCELPTRESVIIATIMNYKGFVDLCFFDVALRRRNLSRATYTVMIIYVLLNAGILPTIIKALYDPKRKYIGYVKRDIMHLKTNSDLKILTCLHKPDNISGAISLLELLSSPLNNDNKDRGVIAVTALHLVKLAGRTFPILIPHDKRSKARLLQNSYIQTMMLAFTEFQQENWESTTVSSFTAYSHENLMDQDICNLALDHLTSMIIVPSGRKWSPDGEYESDDIMIRRVNESLLDLAPCSVGILNYRGYNKGKKKTNSIINVGVIFIGGKDDREALSLAKWMGQNSRVCLTVIRFLSGQELDKSKNWDYLVDDEVLNDLKATYSLANNFNYMEKVVNGGPAVATTVRLVAEDHDLMIVGRDHEDYSLDLTGLAQWMELPELGVIGDLLASKDLRARVSVLVVQQQQQHG</sequence>
<evidence type="ECO:0000250" key="1"/>
<evidence type="ECO:0000255" key="2"/>
<evidence type="ECO:0000305" key="3"/>
<gene>
    <name type="primary">CHX9</name>
    <name type="synonym">CHX09</name>
    <name type="ordered locus">At5g22910</name>
    <name type="ORF">MRN17.14</name>
</gene>
<name>CHX9_ARATH</name>
<dbReference type="EMBL" id="AB005243">
    <property type="protein sequence ID" value="BAB10612.1"/>
    <property type="molecule type" value="Genomic_DNA"/>
</dbReference>
<dbReference type="EMBL" id="CP002688">
    <property type="protein sequence ID" value="AED93096.1"/>
    <property type="molecule type" value="Genomic_DNA"/>
</dbReference>
<dbReference type="EMBL" id="AY926469">
    <property type="protein sequence ID" value="AAX49541.1"/>
    <property type="molecule type" value="mRNA"/>
</dbReference>
<dbReference type="RefSeq" id="NP_197682.1">
    <property type="nucleotide sequence ID" value="NM_122197.1"/>
</dbReference>
<dbReference type="SMR" id="Q9FFB7"/>
<dbReference type="BioGRID" id="17630">
    <property type="interactions" value="14"/>
</dbReference>
<dbReference type="IntAct" id="Q9FFB7">
    <property type="interactions" value="10"/>
</dbReference>
<dbReference type="STRING" id="3702.Q9FFB7"/>
<dbReference type="PaxDb" id="3702-AT5G22910.1"/>
<dbReference type="EnsemblPlants" id="AT5G22910.1">
    <property type="protein sequence ID" value="AT5G22910.1"/>
    <property type="gene ID" value="AT5G22910"/>
</dbReference>
<dbReference type="GeneID" id="832355"/>
<dbReference type="Gramene" id="AT5G22910.1">
    <property type="protein sequence ID" value="AT5G22910.1"/>
    <property type="gene ID" value="AT5G22910"/>
</dbReference>
<dbReference type="KEGG" id="ath:AT5G22910"/>
<dbReference type="Araport" id="AT5G22910"/>
<dbReference type="TAIR" id="AT5G22910">
    <property type="gene designation" value="CHX9"/>
</dbReference>
<dbReference type="eggNOG" id="KOG1650">
    <property type="taxonomic scope" value="Eukaryota"/>
</dbReference>
<dbReference type="HOGENOM" id="CLU_005126_6_1_1"/>
<dbReference type="InParanoid" id="Q9FFB7"/>
<dbReference type="OMA" id="LIFCELP"/>
<dbReference type="PhylomeDB" id="Q9FFB7"/>
<dbReference type="PRO" id="PR:Q9FFB7"/>
<dbReference type="Proteomes" id="UP000006548">
    <property type="component" value="Chromosome 5"/>
</dbReference>
<dbReference type="ExpressionAtlas" id="Q9FFB7">
    <property type="expression patterns" value="baseline and differential"/>
</dbReference>
<dbReference type="GO" id="GO:0016020">
    <property type="term" value="C:membrane"/>
    <property type="evidence" value="ECO:0007669"/>
    <property type="project" value="UniProtKB-SubCell"/>
</dbReference>
<dbReference type="GO" id="GO:0015297">
    <property type="term" value="F:antiporter activity"/>
    <property type="evidence" value="ECO:0007669"/>
    <property type="project" value="UniProtKB-KW"/>
</dbReference>
<dbReference type="GO" id="GO:0006813">
    <property type="term" value="P:potassium ion transport"/>
    <property type="evidence" value="ECO:0007669"/>
    <property type="project" value="UniProtKB-KW"/>
</dbReference>
<dbReference type="GO" id="GO:1902600">
    <property type="term" value="P:proton transmembrane transport"/>
    <property type="evidence" value="ECO:0007669"/>
    <property type="project" value="InterPro"/>
</dbReference>
<dbReference type="Gene3D" id="1.20.1530.20">
    <property type="match status" value="1"/>
</dbReference>
<dbReference type="InterPro" id="IPR006153">
    <property type="entry name" value="Cation/H_exchanger_TM"/>
</dbReference>
<dbReference type="InterPro" id="IPR050794">
    <property type="entry name" value="CPA2_transporter"/>
</dbReference>
<dbReference type="InterPro" id="IPR038770">
    <property type="entry name" value="Na+/solute_symporter_sf"/>
</dbReference>
<dbReference type="PANTHER" id="PTHR32468">
    <property type="entry name" value="CATION/H + ANTIPORTER"/>
    <property type="match status" value="1"/>
</dbReference>
<dbReference type="PANTHER" id="PTHR32468:SF69">
    <property type="entry name" value="CATION_H(+) ANTIPORTER 9"/>
    <property type="match status" value="1"/>
</dbReference>
<dbReference type="Pfam" id="PF23256">
    <property type="entry name" value="CHX17_2nd"/>
    <property type="match status" value="1"/>
</dbReference>
<dbReference type="Pfam" id="PF23259">
    <property type="entry name" value="CHX17_C"/>
    <property type="match status" value="1"/>
</dbReference>
<dbReference type="Pfam" id="PF00999">
    <property type="entry name" value="Na_H_Exchanger"/>
    <property type="match status" value="1"/>
</dbReference>
<protein>
    <recommendedName>
        <fullName>Cation/H(+) antiporter 9</fullName>
    </recommendedName>
    <alternativeName>
        <fullName>Protein CATION/H+ EXCHANGER 9</fullName>
        <shortName>AtCHX9</shortName>
    </alternativeName>
</protein>